<proteinExistence type="inferred from homology"/>
<feature type="chain" id="PRO_1000045184" description="UPF0270 protein YPTB3725">
    <location>
        <begin position="1"/>
        <end position="78"/>
    </location>
</feature>
<name>Y3725_YERPS</name>
<evidence type="ECO:0000255" key="1">
    <source>
        <dbReference type="HAMAP-Rule" id="MF_00690"/>
    </source>
</evidence>
<gene>
    <name type="ordered locus">YPTB3725</name>
</gene>
<sequence>MIIPWQQVDSETLDNLLEAFVLREGTDYGEHERSLTEKVADVRRQLVSGEAVLVWSELHETINIMPRGSFHAGAEEQQ</sequence>
<comment type="similarity">
    <text evidence="1">Belongs to the UPF0270 family.</text>
</comment>
<protein>
    <recommendedName>
        <fullName evidence="1">UPF0270 protein YPTB3725</fullName>
    </recommendedName>
</protein>
<accession>Q664P4</accession>
<reference key="1">
    <citation type="journal article" date="2004" name="Proc. Natl. Acad. Sci. U.S.A.">
        <title>Insights into the evolution of Yersinia pestis through whole-genome comparison with Yersinia pseudotuberculosis.</title>
        <authorList>
            <person name="Chain P.S.G."/>
            <person name="Carniel E."/>
            <person name="Larimer F.W."/>
            <person name="Lamerdin J."/>
            <person name="Stoutland P.O."/>
            <person name="Regala W.M."/>
            <person name="Georgescu A.M."/>
            <person name="Vergez L.M."/>
            <person name="Land M.L."/>
            <person name="Motin V.L."/>
            <person name="Brubaker R.R."/>
            <person name="Fowler J."/>
            <person name="Hinnebusch J."/>
            <person name="Marceau M."/>
            <person name="Medigue C."/>
            <person name="Simonet M."/>
            <person name="Chenal-Francisque V."/>
            <person name="Souza B."/>
            <person name="Dacheux D."/>
            <person name="Elliott J.M."/>
            <person name="Derbise A."/>
            <person name="Hauser L.J."/>
            <person name="Garcia E."/>
        </authorList>
    </citation>
    <scope>NUCLEOTIDE SEQUENCE [LARGE SCALE GENOMIC DNA]</scope>
    <source>
        <strain>IP32953</strain>
    </source>
</reference>
<dbReference type="EMBL" id="BX936398">
    <property type="protein sequence ID" value="CAH22963.1"/>
    <property type="molecule type" value="Genomic_DNA"/>
</dbReference>
<dbReference type="RefSeq" id="WP_011193222.1">
    <property type="nucleotide sequence ID" value="NC_006155.1"/>
</dbReference>
<dbReference type="SMR" id="Q664P4"/>
<dbReference type="KEGG" id="ypo:BZ17_2862"/>
<dbReference type="KEGG" id="yps:YPTB3725"/>
<dbReference type="PATRIC" id="fig|273123.14.peg.3003"/>
<dbReference type="Proteomes" id="UP000001011">
    <property type="component" value="Chromosome"/>
</dbReference>
<dbReference type="Gene3D" id="1.10.10.610">
    <property type="entry name" value="YehU-like"/>
    <property type="match status" value="1"/>
</dbReference>
<dbReference type="HAMAP" id="MF_00690">
    <property type="entry name" value="UPF0270"/>
    <property type="match status" value="1"/>
</dbReference>
<dbReference type="InterPro" id="IPR010648">
    <property type="entry name" value="UPF0270"/>
</dbReference>
<dbReference type="InterPro" id="IPR036685">
    <property type="entry name" value="YehU-like_sf"/>
</dbReference>
<dbReference type="NCBIfam" id="NF003438">
    <property type="entry name" value="PRK04966.1"/>
    <property type="match status" value="1"/>
</dbReference>
<dbReference type="Pfam" id="PF06794">
    <property type="entry name" value="UPF0270"/>
    <property type="match status" value="1"/>
</dbReference>
<dbReference type="PIRSF" id="PIRSF006169">
    <property type="entry name" value="UCP006169"/>
    <property type="match status" value="1"/>
</dbReference>
<dbReference type="SUPFAM" id="SSF118001">
    <property type="entry name" value="YehU-like"/>
    <property type="match status" value="1"/>
</dbReference>
<organism>
    <name type="scientific">Yersinia pseudotuberculosis serotype I (strain IP32953)</name>
    <dbReference type="NCBI Taxonomy" id="273123"/>
    <lineage>
        <taxon>Bacteria</taxon>
        <taxon>Pseudomonadati</taxon>
        <taxon>Pseudomonadota</taxon>
        <taxon>Gammaproteobacteria</taxon>
        <taxon>Enterobacterales</taxon>
        <taxon>Yersiniaceae</taxon>
        <taxon>Yersinia</taxon>
    </lineage>
</organism>